<feature type="chain" id="PRO_1000098375" description="Methionyl-tRNA formyltransferase">
    <location>
        <begin position="1"/>
        <end position="324"/>
    </location>
</feature>
<feature type="binding site" evidence="1">
    <location>
        <begin position="114"/>
        <end position="117"/>
    </location>
    <ligand>
        <name>(6S)-5,6,7,8-tetrahydrofolate</name>
        <dbReference type="ChEBI" id="CHEBI:57453"/>
    </ligand>
</feature>
<sequence>MTASKARIVFMGTPDFAVASLDALIGEGYNVVGVVTIPDKSIGKHQSIPQFSPIKQYALSHEIPLLQPKKLKDPDFLKSLKAWNTDLQVVVSFRLLPEVVWNMPSLGTFNLHASLLPQYRGAAPINWAIINGEKETGVTTFFLDYEIDTGKIIAQECIPIKETDNAGTIHDELMYLGAKLVVKTTNDILSGTVKLISQDETNLGKQKLKIAPKIFREVCKIDWNKTTREIHNFIRGLSPYPGAWTELTCVKGMTFPFKIFETEKADCHDYSLPVGTIVSDKKVYIDVRTKDGFIRLRNVQLAGKKRMPVTDFLKGNAYLLSLHF</sequence>
<protein>
    <recommendedName>
        <fullName evidence="1">Methionyl-tRNA formyltransferase</fullName>
        <ecNumber evidence="1">2.1.2.9</ecNumber>
    </recommendedName>
</protein>
<organism>
    <name type="scientific">Azobacteroides pseudotrichonymphae genomovar. CFP2</name>
    <dbReference type="NCBI Taxonomy" id="511995"/>
    <lineage>
        <taxon>Bacteria</taxon>
        <taxon>Pseudomonadati</taxon>
        <taxon>Bacteroidota</taxon>
        <taxon>Bacteroidia</taxon>
        <taxon>Bacteroidales</taxon>
        <taxon>Candidatus Azobacteroides</taxon>
    </lineage>
</organism>
<comment type="function">
    <text evidence="1">Attaches a formyl group to the free amino group of methionyl-tRNA(fMet). The formyl group appears to play a dual role in the initiator identity of N-formylmethionyl-tRNA by promoting its recognition by IF2 and preventing the misappropriation of this tRNA by the elongation apparatus.</text>
</comment>
<comment type="catalytic activity">
    <reaction evidence="1">
        <text>L-methionyl-tRNA(fMet) + (6R)-10-formyltetrahydrofolate = N-formyl-L-methionyl-tRNA(fMet) + (6S)-5,6,7,8-tetrahydrofolate + H(+)</text>
        <dbReference type="Rhea" id="RHEA:24380"/>
        <dbReference type="Rhea" id="RHEA-COMP:9952"/>
        <dbReference type="Rhea" id="RHEA-COMP:9953"/>
        <dbReference type="ChEBI" id="CHEBI:15378"/>
        <dbReference type="ChEBI" id="CHEBI:57453"/>
        <dbReference type="ChEBI" id="CHEBI:78530"/>
        <dbReference type="ChEBI" id="CHEBI:78844"/>
        <dbReference type="ChEBI" id="CHEBI:195366"/>
        <dbReference type="EC" id="2.1.2.9"/>
    </reaction>
</comment>
<comment type="similarity">
    <text evidence="1">Belongs to the Fmt family.</text>
</comment>
<name>FMT_AZOPC</name>
<reference key="1">
    <citation type="journal article" date="2008" name="Science">
        <title>Genome of an endosymbiont coupling N2 fixation to cellulolysis within RT protist cells in termite gut.</title>
        <authorList>
            <person name="Hongoh Y."/>
            <person name="Sharma V.K."/>
            <person name="Prakash T."/>
            <person name="Noda S."/>
            <person name="Toh H."/>
            <person name="Taylor T.D."/>
            <person name="Kudo T."/>
            <person name="Sakaki Y."/>
            <person name="Toyoda A."/>
            <person name="Hattori M."/>
            <person name="Ohkuma M."/>
        </authorList>
    </citation>
    <scope>NUCLEOTIDE SEQUENCE [LARGE SCALE GENOMIC DNA]</scope>
</reference>
<proteinExistence type="inferred from homology"/>
<accession>B6YQF1</accession>
<evidence type="ECO:0000255" key="1">
    <source>
        <dbReference type="HAMAP-Rule" id="MF_00182"/>
    </source>
</evidence>
<dbReference type="EC" id="2.1.2.9" evidence="1"/>
<dbReference type="EMBL" id="AP010656">
    <property type="protein sequence ID" value="BAG83423.1"/>
    <property type="molecule type" value="Genomic_DNA"/>
</dbReference>
<dbReference type="RefSeq" id="WP_012573184.1">
    <property type="nucleotide sequence ID" value="NC_011565.1"/>
</dbReference>
<dbReference type="SMR" id="B6YQF1"/>
<dbReference type="STRING" id="511995.CFPG_160"/>
<dbReference type="KEGG" id="aps:CFPG_160"/>
<dbReference type="eggNOG" id="COG0223">
    <property type="taxonomic scope" value="Bacteria"/>
</dbReference>
<dbReference type="HOGENOM" id="CLU_033347_1_1_10"/>
<dbReference type="OrthoDB" id="9802815at2"/>
<dbReference type="Proteomes" id="UP000000723">
    <property type="component" value="Chromosome"/>
</dbReference>
<dbReference type="GO" id="GO:0005829">
    <property type="term" value="C:cytosol"/>
    <property type="evidence" value="ECO:0007669"/>
    <property type="project" value="TreeGrafter"/>
</dbReference>
<dbReference type="GO" id="GO:0004479">
    <property type="term" value="F:methionyl-tRNA formyltransferase activity"/>
    <property type="evidence" value="ECO:0007669"/>
    <property type="project" value="UniProtKB-UniRule"/>
</dbReference>
<dbReference type="CDD" id="cd08646">
    <property type="entry name" value="FMT_core_Met-tRNA-FMT_N"/>
    <property type="match status" value="1"/>
</dbReference>
<dbReference type="CDD" id="cd08704">
    <property type="entry name" value="Met_tRNA_FMT_C"/>
    <property type="match status" value="1"/>
</dbReference>
<dbReference type="Gene3D" id="3.40.50.12230">
    <property type="match status" value="1"/>
</dbReference>
<dbReference type="HAMAP" id="MF_00182">
    <property type="entry name" value="Formyl_trans"/>
    <property type="match status" value="1"/>
</dbReference>
<dbReference type="InterPro" id="IPR005794">
    <property type="entry name" value="Fmt"/>
</dbReference>
<dbReference type="InterPro" id="IPR005793">
    <property type="entry name" value="Formyl_trans_C"/>
</dbReference>
<dbReference type="InterPro" id="IPR002376">
    <property type="entry name" value="Formyl_transf_N"/>
</dbReference>
<dbReference type="InterPro" id="IPR036477">
    <property type="entry name" value="Formyl_transf_N_sf"/>
</dbReference>
<dbReference type="InterPro" id="IPR011034">
    <property type="entry name" value="Formyl_transferase-like_C_sf"/>
</dbReference>
<dbReference type="InterPro" id="IPR044135">
    <property type="entry name" value="Met-tRNA-FMT_C"/>
</dbReference>
<dbReference type="InterPro" id="IPR041711">
    <property type="entry name" value="Met-tRNA-FMT_N"/>
</dbReference>
<dbReference type="NCBIfam" id="TIGR00460">
    <property type="entry name" value="fmt"/>
    <property type="match status" value="1"/>
</dbReference>
<dbReference type="PANTHER" id="PTHR11138">
    <property type="entry name" value="METHIONYL-TRNA FORMYLTRANSFERASE"/>
    <property type="match status" value="1"/>
</dbReference>
<dbReference type="PANTHER" id="PTHR11138:SF5">
    <property type="entry name" value="METHIONYL-TRNA FORMYLTRANSFERASE, MITOCHONDRIAL"/>
    <property type="match status" value="1"/>
</dbReference>
<dbReference type="Pfam" id="PF02911">
    <property type="entry name" value="Formyl_trans_C"/>
    <property type="match status" value="1"/>
</dbReference>
<dbReference type="Pfam" id="PF00551">
    <property type="entry name" value="Formyl_trans_N"/>
    <property type="match status" value="1"/>
</dbReference>
<dbReference type="SUPFAM" id="SSF50486">
    <property type="entry name" value="FMT C-terminal domain-like"/>
    <property type="match status" value="1"/>
</dbReference>
<dbReference type="SUPFAM" id="SSF53328">
    <property type="entry name" value="Formyltransferase"/>
    <property type="match status" value="1"/>
</dbReference>
<keyword id="KW-0648">Protein biosynthesis</keyword>
<keyword id="KW-1185">Reference proteome</keyword>
<keyword id="KW-0808">Transferase</keyword>
<gene>
    <name evidence="1" type="primary">fmt</name>
    <name type="ordered locus">CFPG_160</name>
</gene>